<reference key="1">
    <citation type="journal article" date="2010" name="Zoology">
        <title>Transcriptome analysis of the venom glands of the Chinese wolf spider Lycosa singoriensis.</title>
        <authorList>
            <person name="Zhang Y."/>
            <person name="Chen J."/>
            <person name="Tang X."/>
            <person name="Wang F."/>
            <person name="Jiang L."/>
            <person name="Xiong X."/>
            <person name="Wang M."/>
            <person name="Rong M."/>
            <person name="Liu Z."/>
            <person name="Liang S."/>
        </authorList>
    </citation>
    <scope>NUCLEOTIDE SEQUENCE [LARGE SCALE MRNA]</scope>
    <source>
        <tissue>Venom gland</tissue>
    </source>
</reference>
<proteinExistence type="evidence at transcript level"/>
<sequence length="110" mass="12502">MKFVLLFGVLLVTLFSYSSAEMLDDFDQADEDELLSLIEKEEARKDCIPKHHECTSNKHGCCRGHLFKYKCQCTTVVTQSREETERCFCGTPPHHKAAELVVGFGKKIFG</sequence>
<organism>
    <name type="scientific">Lycosa singoriensis</name>
    <name type="common">Wolf spider</name>
    <name type="synonym">Aranea singoriensis</name>
    <dbReference type="NCBI Taxonomy" id="434756"/>
    <lineage>
        <taxon>Eukaryota</taxon>
        <taxon>Metazoa</taxon>
        <taxon>Ecdysozoa</taxon>
        <taxon>Arthropoda</taxon>
        <taxon>Chelicerata</taxon>
        <taxon>Arachnida</taxon>
        <taxon>Araneae</taxon>
        <taxon>Araneomorphae</taxon>
        <taxon>Entelegynae</taxon>
        <taxon>Lycosoidea</taxon>
        <taxon>Lycosidae</taxon>
        <taxon>Lycosa</taxon>
    </lineage>
</organism>
<accession>B6DCN5</accession>
<protein>
    <recommendedName>
        <fullName>U1-lycotoxin-Ls1dd</fullName>
    </recommendedName>
    <alternativeName>
        <fullName>Toxin-like structure LSTX-A46</fullName>
    </alternativeName>
</protein>
<comment type="subcellular location">
    <subcellularLocation>
        <location evidence="1">Secreted</location>
    </subcellularLocation>
</comment>
<comment type="tissue specificity">
    <text>Expressed by the venom gland.</text>
</comment>
<comment type="domain">
    <text evidence="1">The presence of a 'disulfide through disulfide knot' structurally defines this protein as a knottin.</text>
</comment>
<comment type="similarity">
    <text evidence="3">Belongs to the neurotoxin 19 (CSTX) family. 03 subfamily.</text>
</comment>
<feature type="signal peptide" evidence="2">
    <location>
        <begin position="1"/>
        <end position="20"/>
    </location>
</feature>
<feature type="propeptide" id="PRO_0000401587" evidence="1">
    <location>
        <begin position="21"/>
        <end position="44"/>
    </location>
</feature>
<feature type="chain" id="PRO_0000401588" description="U1-lycotoxin-Ls1dd">
    <location>
        <begin position="45"/>
        <end position="110"/>
    </location>
</feature>
<feature type="disulfide bond" evidence="1">
    <location>
        <begin position="47"/>
        <end position="62"/>
    </location>
</feature>
<feature type="disulfide bond" evidence="1">
    <location>
        <begin position="54"/>
        <end position="71"/>
    </location>
</feature>
<feature type="disulfide bond" evidence="1">
    <location>
        <begin position="61"/>
        <end position="89"/>
    </location>
</feature>
<feature type="disulfide bond" evidence="1">
    <location>
        <begin position="73"/>
        <end position="87"/>
    </location>
</feature>
<keyword id="KW-1015">Disulfide bond</keyword>
<keyword id="KW-0960">Knottin</keyword>
<keyword id="KW-0964">Secreted</keyword>
<keyword id="KW-0732">Signal</keyword>
<keyword id="KW-0800">Toxin</keyword>
<evidence type="ECO:0000250" key="1"/>
<evidence type="ECO:0000255" key="2"/>
<evidence type="ECO:0000305" key="3"/>
<name>TX146_LYCSI</name>
<dbReference type="EMBL" id="EU925969">
    <property type="protein sequence ID" value="ACI41301.1"/>
    <property type="molecule type" value="mRNA"/>
</dbReference>
<dbReference type="EMBL" id="FM863973">
    <property type="protein sequence ID" value="CAS03571.1"/>
    <property type="molecule type" value="mRNA"/>
</dbReference>
<dbReference type="SMR" id="B6DCN5"/>
<dbReference type="ArachnoServer" id="AS000918">
    <property type="toxin name" value="U1-lycotoxin-Ls1dd"/>
</dbReference>
<dbReference type="GO" id="GO:0005576">
    <property type="term" value="C:extracellular region"/>
    <property type="evidence" value="ECO:0007669"/>
    <property type="project" value="UniProtKB-SubCell"/>
</dbReference>
<dbReference type="GO" id="GO:0090729">
    <property type="term" value="F:toxin activity"/>
    <property type="evidence" value="ECO:0007669"/>
    <property type="project" value="UniProtKB-KW"/>
</dbReference>
<dbReference type="InterPro" id="IPR019553">
    <property type="entry name" value="Spider_toxin_CSTX_knottin"/>
</dbReference>
<dbReference type="InterPro" id="IPR011142">
    <property type="entry name" value="Spider_toxin_CSTX_Knottin_CS"/>
</dbReference>
<dbReference type="Pfam" id="PF10530">
    <property type="entry name" value="Toxin_35"/>
    <property type="match status" value="1"/>
</dbReference>
<dbReference type="PROSITE" id="PS60029">
    <property type="entry name" value="SPIDER_CSTX"/>
    <property type="match status" value="1"/>
</dbReference>